<name>CHEZ_PSEAB</name>
<dbReference type="EC" id="3.1.3.-"/>
<dbReference type="EMBL" id="CP000438">
    <property type="protein sequence ID" value="ABJ10638.1"/>
    <property type="molecule type" value="Genomic_DNA"/>
</dbReference>
<dbReference type="RefSeq" id="WP_003083075.1">
    <property type="nucleotide sequence ID" value="NZ_CP034244.1"/>
</dbReference>
<dbReference type="SMR" id="Q02JU1"/>
<dbReference type="KEGG" id="pau:PA14_45610"/>
<dbReference type="PseudoCAP" id="PA14_45610"/>
<dbReference type="HOGENOM" id="CLU_080718_0_0_6"/>
<dbReference type="BioCyc" id="PAER208963:G1G74-3826-MONOMER"/>
<dbReference type="Proteomes" id="UP000000653">
    <property type="component" value="Chromosome"/>
</dbReference>
<dbReference type="GO" id="GO:0009288">
    <property type="term" value="C:bacterial-type flagellum"/>
    <property type="evidence" value="ECO:0007669"/>
    <property type="project" value="InterPro"/>
</dbReference>
<dbReference type="GO" id="GO:0005737">
    <property type="term" value="C:cytoplasm"/>
    <property type="evidence" value="ECO:0007669"/>
    <property type="project" value="UniProtKB-SubCell"/>
</dbReference>
<dbReference type="GO" id="GO:0004721">
    <property type="term" value="F:phosphoprotein phosphatase activity"/>
    <property type="evidence" value="ECO:0007669"/>
    <property type="project" value="UniProtKB-KW"/>
</dbReference>
<dbReference type="GO" id="GO:0097588">
    <property type="term" value="P:archaeal or bacterial-type flagellum-dependent cell motility"/>
    <property type="evidence" value="ECO:0007669"/>
    <property type="project" value="UniProtKB-KW"/>
</dbReference>
<dbReference type="GO" id="GO:0006935">
    <property type="term" value="P:chemotaxis"/>
    <property type="evidence" value="ECO:0007669"/>
    <property type="project" value="UniProtKB-KW"/>
</dbReference>
<dbReference type="GO" id="GO:0050920">
    <property type="term" value="P:regulation of chemotaxis"/>
    <property type="evidence" value="ECO:0007669"/>
    <property type="project" value="InterPro"/>
</dbReference>
<dbReference type="Gene3D" id="1.10.287.500">
    <property type="entry name" value="Helix hairpin bin"/>
    <property type="match status" value="1"/>
</dbReference>
<dbReference type="InterPro" id="IPR007439">
    <property type="entry name" value="Chemotax_Pase_CheZ"/>
</dbReference>
<dbReference type="InterPro" id="IPR050992">
    <property type="entry name" value="CheZ_family_phosphatases"/>
</dbReference>
<dbReference type="PANTHER" id="PTHR43693">
    <property type="entry name" value="PROTEIN PHOSPHATASE CHEZ"/>
    <property type="match status" value="1"/>
</dbReference>
<dbReference type="PANTHER" id="PTHR43693:SF1">
    <property type="entry name" value="PROTEIN PHOSPHATASE CHEZ"/>
    <property type="match status" value="1"/>
</dbReference>
<dbReference type="Pfam" id="PF04344">
    <property type="entry name" value="CheZ"/>
    <property type="match status" value="1"/>
</dbReference>
<dbReference type="PIRSF" id="PIRSF002884">
    <property type="entry name" value="CheZ"/>
    <property type="match status" value="1"/>
</dbReference>
<dbReference type="SUPFAM" id="SSF75708">
    <property type="entry name" value="Chemotaxis phosphatase CheZ"/>
    <property type="match status" value="1"/>
</dbReference>
<accession>Q02JU1</accession>
<comment type="function">
    <text evidence="1">Plays an important role in bacterial chemotaxis signal transduction pathway by accelerating the dephosphorylation of phosphorylated CheY (CheY-P).</text>
</comment>
<comment type="subunit">
    <text evidence="1">Homodimer.</text>
</comment>
<comment type="subcellular location">
    <subcellularLocation>
        <location evidence="1">Cytoplasm</location>
    </subcellularLocation>
</comment>
<comment type="similarity">
    <text evidence="3">Belongs to the CheZ family.</text>
</comment>
<organism>
    <name type="scientific">Pseudomonas aeruginosa (strain UCBPP-PA14)</name>
    <dbReference type="NCBI Taxonomy" id="208963"/>
    <lineage>
        <taxon>Bacteria</taxon>
        <taxon>Pseudomonadati</taxon>
        <taxon>Pseudomonadota</taxon>
        <taxon>Gammaproteobacteria</taxon>
        <taxon>Pseudomonadales</taxon>
        <taxon>Pseudomonadaceae</taxon>
        <taxon>Pseudomonas</taxon>
    </lineage>
</organism>
<protein>
    <recommendedName>
        <fullName>Protein phosphatase CheZ</fullName>
        <ecNumber>3.1.3.-</ecNumber>
    </recommendedName>
    <alternativeName>
        <fullName>Chemotaxis protein CheZ</fullName>
    </alternativeName>
</protein>
<proteinExistence type="inferred from homology"/>
<reference key="1">
    <citation type="journal article" date="2006" name="Genome Biol.">
        <title>Genomic analysis reveals that Pseudomonas aeruginosa virulence is combinatorial.</title>
        <authorList>
            <person name="Lee D.G."/>
            <person name="Urbach J.M."/>
            <person name="Wu G."/>
            <person name="Liberati N.T."/>
            <person name="Feinbaum R.L."/>
            <person name="Miyata S."/>
            <person name="Diggins L.T."/>
            <person name="He J."/>
            <person name="Saucier M."/>
            <person name="Deziel E."/>
            <person name="Friedman L."/>
            <person name="Li L."/>
            <person name="Grills G."/>
            <person name="Montgomery K."/>
            <person name="Kucherlapati R."/>
            <person name="Rahme L.G."/>
            <person name="Ausubel F.M."/>
        </authorList>
    </citation>
    <scope>NUCLEOTIDE SEQUENCE [LARGE SCALE GENOMIC DNA]</scope>
    <source>
        <strain>UCBPP-PA14</strain>
    </source>
</reference>
<evidence type="ECO:0000250" key="1"/>
<evidence type="ECO:0000256" key="2">
    <source>
        <dbReference type="SAM" id="MobiDB-lite"/>
    </source>
</evidence>
<evidence type="ECO:0000305" key="3"/>
<feature type="chain" id="PRO_0000410780" description="Protein phosphatase CheZ">
    <location>
        <begin position="1"/>
        <end position="262"/>
    </location>
</feature>
<feature type="region of interest" description="Disordered" evidence="2">
    <location>
        <begin position="229"/>
        <end position="252"/>
    </location>
</feature>
<feature type="site" description="Enhances dephosphorylation of CheY-P" evidence="1">
    <location>
        <position position="182"/>
    </location>
</feature>
<sequence>MVLGNDSTGDEFESTLKKHARELVDCLERGHFQQAVQLIQELSQARDRGLYQEVGKLTRELHNAIVDFQIDPHSPHAQEMSQIADATDRLSYVVEMTEKAANRTMDLVEQSAPLVNQLGDDSRELHQEWQRFMRREIDADGFRELAKRIEQFLVRSGENAGQLSSQLNDILLAQDYQDLTGQVIKRVTKLVTEVESNLVKLVWMAGQVDRYAGIEHDHVSMRHQAALERSAKGEGPQVAAEKREDVVSGQDDVDDLLSSLGF</sequence>
<keyword id="KW-0145">Chemotaxis</keyword>
<keyword id="KW-0963">Cytoplasm</keyword>
<keyword id="KW-0283">Flagellar rotation</keyword>
<keyword id="KW-0378">Hydrolase</keyword>
<keyword id="KW-0904">Protein phosphatase</keyword>
<gene>
    <name type="primary">cheZ</name>
    <name type="ordered locus">PA14_45610</name>
</gene>